<organism>
    <name type="scientific">Oceanobacillus iheyensis (strain DSM 14371 / CIP 107618 / JCM 11309 / KCTC 3954 / HTE831)</name>
    <dbReference type="NCBI Taxonomy" id="221109"/>
    <lineage>
        <taxon>Bacteria</taxon>
        <taxon>Bacillati</taxon>
        <taxon>Bacillota</taxon>
        <taxon>Bacilli</taxon>
        <taxon>Bacillales</taxon>
        <taxon>Bacillaceae</taxon>
        <taxon>Oceanobacillus</taxon>
    </lineage>
</organism>
<sequence length="1428" mass="161813">MDISKKEKLKLLLEQIRMPDNEIEAHFSNSYLDKVEVHKADKKWHFYINIDHVLPFQTYQLFHHSLKESFASIAEVSLTLSAENRHCPEGDIQIYWKHFIAQTSLSPAYRDLVLDQAPEVSNNKIMLTARNEAEASALKKRLEAKFHDFCLSIGSLPYTLEVEVKTNTEAMQEFRDKKALEDQQLVMKTVQEKEKRDKDKSVPDQQPLAIGYKIQDEPITMDQIIDEERRITVQGYVFDAEVRELRSGRSLLIIKATDYTDSIQIKMFSKGDEDAAKFASVKKGMWVKARGSIQTDMYTNELAMMAKDIHEIHVSQRMDDASEDKKRVELHTHTTMSQMDAVVSPEALVEQAAKWGHKAIAITDHAGVQGFPDAHNAGKKHGVKVLYGVEANLVDDGVPIAYNEADRNLYEDTFVVFDVETTGLSAVYDTIIELAAVKIKGGEIVDRFESFANPHHALSQTTIDLTGITDDMVNDAPEVADVLKDFHTWMGNDILVAHNASFDMGFLNQGFQRIDYEKASNPVVDTLELARFLLPELRNHRLNTLCKHLDIELTQHHRAIYDAEATGYLLWKLVQRLVEKEISNHLELNNHMGENNAYQRSRPYHCTLIAQTEEGLKNLYKLVSRAHIDFFYRVPRLPRSVLQKHREGILVGTACDKGEVFETMMQKSEEEAEQVADFYDYIEVQPPENYTHLIEKDLVQNESQILDILRKLVNLGDKMKKTVVATGNVHYLHEHDKQYRQILIGSQAGNPLSRHKLPDTPFRTTTEMINCFHFLGEKKANEIVVDNTQKLTDSIEEISPVKDGLFTPNIEGAEQEMRDLCYNKAKEVYGEPVPQIVVDRLEKELESIIGNGFAVIYLISQKLVKKSLDDGYLVGSRGSVGSSFVATMTEITEVNPLVPHYVCKHCHHHEFFTDGSVASGFDLPDKDCPGCGKGLTKDGQDIPFETFLGFKGDKVPDIDLNFSGDYQPRAHNYTKELFGIDNVYRAGTIGTVAEKTAYGYVKGYASDNQFVYKNAEVDRLVQGCTGVKRTTGQHPGGIIVVPSDKEIYDFTPIQFPADDRNSEWRTTHFDFHSIHDNLLKLDILGHDDPTVIRMLQDLSGMDPKNIPTDDEEVMKIFSGTESLGVTPEQINCKTGTLGVPEFGTKFVRQMLEDTKPKTFAELLIISGLSHGTDVWLGNAQELINDGICQLPDVIGCRDDIMVYLMHKGLDPSMAFTIMEFVRKGKGLKDEWIDEMKKHAVPDWYIESCKKIKYMFPKAHAAAYVLMAVRIAYFKVHHPILFYAAYFTVRADDFELDTMIKGSDAIRKRIEEITVKGNDASPKEKNLLTVLEISLEMCERGFSFKKVDLYQSSATDFIVEGDSLLPPFNAVDGLGTNAALNIVKAREEGEFLSKEDLRERSKISKTVLEYLDNHGCLEGMEDKNQLSLF</sequence>
<proteinExistence type="inferred from homology"/>
<dbReference type="EC" id="2.7.7.7" evidence="1"/>
<dbReference type="EMBL" id="BA000028">
    <property type="protein sequence ID" value="BAC13549.1"/>
    <property type="molecule type" value="Genomic_DNA"/>
</dbReference>
<dbReference type="RefSeq" id="WP_011065993.1">
    <property type="nucleotide sequence ID" value="NC_004193.1"/>
</dbReference>
<dbReference type="SMR" id="Q8EQU6"/>
<dbReference type="STRING" id="221109.gene:10733833"/>
<dbReference type="KEGG" id="oih:OB1593"/>
<dbReference type="eggNOG" id="COG2176">
    <property type="taxonomic scope" value="Bacteria"/>
</dbReference>
<dbReference type="HOGENOM" id="CLU_003297_2_0_9"/>
<dbReference type="OrthoDB" id="9804290at2"/>
<dbReference type="PhylomeDB" id="Q8EQU6"/>
<dbReference type="Proteomes" id="UP000000822">
    <property type="component" value="Chromosome"/>
</dbReference>
<dbReference type="GO" id="GO:0005737">
    <property type="term" value="C:cytoplasm"/>
    <property type="evidence" value="ECO:0007669"/>
    <property type="project" value="UniProtKB-SubCell"/>
</dbReference>
<dbReference type="GO" id="GO:0008408">
    <property type="term" value="F:3'-5' exonuclease activity"/>
    <property type="evidence" value="ECO:0007669"/>
    <property type="project" value="UniProtKB-UniRule"/>
</dbReference>
<dbReference type="GO" id="GO:0003677">
    <property type="term" value="F:DNA binding"/>
    <property type="evidence" value="ECO:0007669"/>
    <property type="project" value="UniProtKB-UniRule"/>
</dbReference>
<dbReference type="GO" id="GO:0003887">
    <property type="term" value="F:DNA-directed DNA polymerase activity"/>
    <property type="evidence" value="ECO:0007669"/>
    <property type="project" value="UniProtKB-UniRule"/>
</dbReference>
<dbReference type="GO" id="GO:0006261">
    <property type="term" value="P:DNA-templated DNA replication"/>
    <property type="evidence" value="ECO:0007669"/>
    <property type="project" value="UniProtKB-UniRule"/>
</dbReference>
<dbReference type="CDD" id="cd06127">
    <property type="entry name" value="DEDDh"/>
    <property type="match status" value="1"/>
</dbReference>
<dbReference type="CDD" id="cd07435">
    <property type="entry name" value="PHP_PolIIIA_POLC"/>
    <property type="match status" value="1"/>
</dbReference>
<dbReference type="CDD" id="cd04484">
    <property type="entry name" value="polC_OBF"/>
    <property type="match status" value="1"/>
</dbReference>
<dbReference type="FunFam" id="3.30.420.10:FF:000045">
    <property type="entry name" value="3'-5' exonuclease DinG"/>
    <property type="match status" value="1"/>
</dbReference>
<dbReference type="Gene3D" id="1.10.150.870">
    <property type="match status" value="1"/>
</dbReference>
<dbReference type="Gene3D" id="3.30.1900.20">
    <property type="match status" value="2"/>
</dbReference>
<dbReference type="Gene3D" id="6.10.140.1510">
    <property type="match status" value="1"/>
</dbReference>
<dbReference type="Gene3D" id="3.20.20.140">
    <property type="entry name" value="Metal-dependent hydrolases"/>
    <property type="match status" value="2"/>
</dbReference>
<dbReference type="Gene3D" id="2.40.50.140">
    <property type="entry name" value="Nucleic acid-binding proteins"/>
    <property type="match status" value="1"/>
</dbReference>
<dbReference type="Gene3D" id="1.10.150.700">
    <property type="entry name" value="PolC, middle finger domain"/>
    <property type="match status" value="1"/>
</dbReference>
<dbReference type="Gene3D" id="3.30.420.10">
    <property type="entry name" value="Ribonuclease H-like superfamily/Ribonuclease H"/>
    <property type="match status" value="1"/>
</dbReference>
<dbReference type="HAMAP" id="MF_00356">
    <property type="entry name" value="DNApol_PolC"/>
    <property type="match status" value="1"/>
</dbReference>
<dbReference type="InterPro" id="IPR011708">
    <property type="entry name" value="DNA_pol3_alpha_NTPase_dom"/>
</dbReference>
<dbReference type="InterPro" id="IPR040982">
    <property type="entry name" value="DNA_pol3_finger"/>
</dbReference>
<dbReference type="InterPro" id="IPR024754">
    <property type="entry name" value="DNA_PolC-like_N_II"/>
</dbReference>
<dbReference type="InterPro" id="IPR028112">
    <property type="entry name" value="DNA_PolC-type_N_I"/>
</dbReference>
<dbReference type="InterPro" id="IPR004805">
    <property type="entry name" value="DnaE2/DnaE/PolC"/>
</dbReference>
<dbReference type="InterPro" id="IPR029460">
    <property type="entry name" value="DNAPol_HHH"/>
</dbReference>
<dbReference type="InterPro" id="IPR006054">
    <property type="entry name" value="DnaQ"/>
</dbReference>
<dbReference type="InterPro" id="IPR013520">
    <property type="entry name" value="Exonuclease_RNaseT/DNA_pol3"/>
</dbReference>
<dbReference type="InterPro" id="IPR012340">
    <property type="entry name" value="NA-bd_OB-fold"/>
</dbReference>
<dbReference type="InterPro" id="IPR004365">
    <property type="entry name" value="NA-bd_OB_tRNA"/>
</dbReference>
<dbReference type="InterPro" id="IPR004013">
    <property type="entry name" value="PHP_dom"/>
</dbReference>
<dbReference type="InterPro" id="IPR003141">
    <property type="entry name" value="Pol/His_phosphatase_N"/>
</dbReference>
<dbReference type="InterPro" id="IPR016195">
    <property type="entry name" value="Pol/histidinol_Pase-like"/>
</dbReference>
<dbReference type="InterPro" id="IPR006308">
    <property type="entry name" value="Pol_III_a_PolC-type_gram_pos"/>
</dbReference>
<dbReference type="InterPro" id="IPR044923">
    <property type="entry name" value="PolC_middle_finger_sf"/>
</dbReference>
<dbReference type="InterPro" id="IPR012337">
    <property type="entry name" value="RNaseH-like_sf"/>
</dbReference>
<dbReference type="InterPro" id="IPR036397">
    <property type="entry name" value="RNaseH_sf"/>
</dbReference>
<dbReference type="NCBIfam" id="TIGR00573">
    <property type="entry name" value="dnaq"/>
    <property type="match status" value="1"/>
</dbReference>
<dbReference type="NCBIfam" id="TIGR01405">
    <property type="entry name" value="polC_Gram_pos"/>
    <property type="match status" value="1"/>
</dbReference>
<dbReference type="NCBIfam" id="NF001688">
    <property type="entry name" value="PRK00448.1"/>
    <property type="match status" value="1"/>
</dbReference>
<dbReference type="PANTHER" id="PTHR32294:SF5">
    <property type="entry name" value="DNA POLYMERASE III POLC-TYPE"/>
    <property type="match status" value="1"/>
</dbReference>
<dbReference type="PANTHER" id="PTHR32294">
    <property type="entry name" value="DNA POLYMERASE III SUBUNIT ALPHA"/>
    <property type="match status" value="1"/>
</dbReference>
<dbReference type="Pfam" id="PF14480">
    <property type="entry name" value="DNA_pol3_a_NI"/>
    <property type="match status" value="1"/>
</dbReference>
<dbReference type="Pfam" id="PF11490">
    <property type="entry name" value="DNA_pol3_a_NII"/>
    <property type="match status" value="1"/>
</dbReference>
<dbReference type="Pfam" id="PF07733">
    <property type="entry name" value="DNA_pol3_alpha"/>
    <property type="match status" value="1"/>
</dbReference>
<dbReference type="Pfam" id="PF17657">
    <property type="entry name" value="DNA_pol3_finger"/>
    <property type="match status" value="1"/>
</dbReference>
<dbReference type="Pfam" id="PF14579">
    <property type="entry name" value="HHH_6"/>
    <property type="match status" value="1"/>
</dbReference>
<dbReference type="Pfam" id="PF02811">
    <property type="entry name" value="PHP"/>
    <property type="match status" value="2"/>
</dbReference>
<dbReference type="Pfam" id="PF00929">
    <property type="entry name" value="RNase_T"/>
    <property type="match status" value="1"/>
</dbReference>
<dbReference type="Pfam" id="PF01336">
    <property type="entry name" value="tRNA_anti-codon"/>
    <property type="match status" value="1"/>
</dbReference>
<dbReference type="SMART" id="SM00479">
    <property type="entry name" value="EXOIII"/>
    <property type="match status" value="1"/>
</dbReference>
<dbReference type="SMART" id="SM00481">
    <property type="entry name" value="POLIIIAc"/>
    <property type="match status" value="1"/>
</dbReference>
<dbReference type="SUPFAM" id="SSF50249">
    <property type="entry name" value="Nucleic acid-binding proteins"/>
    <property type="match status" value="1"/>
</dbReference>
<dbReference type="SUPFAM" id="SSF89550">
    <property type="entry name" value="PHP domain-like"/>
    <property type="match status" value="1"/>
</dbReference>
<dbReference type="SUPFAM" id="SSF53098">
    <property type="entry name" value="Ribonuclease H-like"/>
    <property type="match status" value="1"/>
</dbReference>
<protein>
    <recommendedName>
        <fullName evidence="1">DNA polymerase III PolC-type</fullName>
        <shortName evidence="1">PolIII</shortName>
        <ecNumber evidence="1">2.7.7.7</ecNumber>
    </recommendedName>
</protein>
<gene>
    <name evidence="1" type="primary">polC</name>
    <name type="ordered locus">OB1593</name>
</gene>
<keyword id="KW-0963">Cytoplasm</keyword>
<keyword id="KW-0235">DNA replication</keyword>
<keyword id="KW-0239">DNA-directed DNA polymerase</keyword>
<keyword id="KW-0269">Exonuclease</keyword>
<keyword id="KW-0378">Hydrolase</keyword>
<keyword id="KW-0540">Nuclease</keyword>
<keyword id="KW-0548">Nucleotidyltransferase</keyword>
<keyword id="KW-1185">Reference proteome</keyword>
<keyword id="KW-0808">Transferase</keyword>
<comment type="function">
    <text evidence="1">Required for replicative DNA synthesis. This DNA polymerase also exhibits 3' to 5' exonuclease activity.</text>
</comment>
<comment type="catalytic activity">
    <reaction evidence="1">
        <text>DNA(n) + a 2'-deoxyribonucleoside 5'-triphosphate = DNA(n+1) + diphosphate</text>
        <dbReference type="Rhea" id="RHEA:22508"/>
        <dbReference type="Rhea" id="RHEA-COMP:17339"/>
        <dbReference type="Rhea" id="RHEA-COMP:17340"/>
        <dbReference type="ChEBI" id="CHEBI:33019"/>
        <dbReference type="ChEBI" id="CHEBI:61560"/>
        <dbReference type="ChEBI" id="CHEBI:173112"/>
        <dbReference type="EC" id="2.7.7.7"/>
    </reaction>
</comment>
<comment type="subcellular location">
    <subcellularLocation>
        <location evidence="1">Cytoplasm</location>
    </subcellularLocation>
</comment>
<comment type="similarity">
    <text evidence="1">Belongs to the DNA polymerase type-C family. PolC subfamily.</text>
</comment>
<accession>Q8EQU6</accession>
<evidence type="ECO:0000255" key="1">
    <source>
        <dbReference type="HAMAP-Rule" id="MF_00356"/>
    </source>
</evidence>
<reference key="1">
    <citation type="journal article" date="2002" name="Nucleic Acids Res.">
        <title>Genome sequence of Oceanobacillus iheyensis isolated from the Iheya Ridge and its unexpected adaptive capabilities to extreme environments.</title>
        <authorList>
            <person name="Takami H."/>
            <person name="Takaki Y."/>
            <person name="Uchiyama I."/>
        </authorList>
    </citation>
    <scope>NUCLEOTIDE SEQUENCE [LARGE SCALE GENOMIC DNA]</scope>
    <source>
        <strain>DSM 14371 / CIP 107618 / JCM 11309 / KCTC 3954 / HTE831</strain>
    </source>
</reference>
<name>DPO3_OCEIH</name>
<feature type="chain" id="PRO_0000204585" description="DNA polymerase III PolC-type">
    <location>
        <begin position="1"/>
        <end position="1428"/>
    </location>
</feature>
<feature type="domain" description="Exonuclease">
    <location>
        <begin position="414"/>
        <end position="570"/>
    </location>
</feature>